<proteinExistence type="evidence at protein level"/>
<dbReference type="EC" id="2.3.1.101" evidence="1 3"/>
<dbReference type="EMBL" id="X85115">
    <property type="protein sequence ID" value="CAA59435.1"/>
    <property type="molecule type" value="Genomic_DNA"/>
</dbReference>
<dbReference type="EMBL" id="AE009439">
    <property type="protein sequence ID" value="AAM01333.1"/>
    <property type="molecule type" value="Genomic_DNA"/>
</dbReference>
<dbReference type="PIR" id="S65950">
    <property type="entry name" value="S57647"/>
</dbReference>
<dbReference type="RefSeq" id="WP_011018488.1">
    <property type="nucleotide sequence ID" value="NC_003551.1"/>
</dbReference>
<dbReference type="PDB" id="1FTR">
    <property type="method" value="X-ray"/>
    <property type="resolution" value="1.70 A"/>
    <property type="chains" value="A/B/C/D=1-296"/>
</dbReference>
<dbReference type="PDB" id="2FHJ">
    <property type="method" value="X-ray"/>
    <property type="resolution" value="2.00 A"/>
    <property type="chains" value="A/B/C/D=1-296"/>
</dbReference>
<dbReference type="PDB" id="2FHK">
    <property type="method" value="X-ray"/>
    <property type="resolution" value="2.00 A"/>
    <property type="chains" value="A/B/C/D=1-296"/>
</dbReference>
<dbReference type="PDBsum" id="1FTR"/>
<dbReference type="PDBsum" id="2FHJ"/>
<dbReference type="PDBsum" id="2FHK"/>
<dbReference type="SMR" id="Q49610"/>
<dbReference type="FunCoup" id="Q49610">
    <property type="interactions" value="65"/>
</dbReference>
<dbReference type="STRING" id="190192.MK0116"/>
<dbReference type="PaxDb" id="190192-MK0116"/>
<dbReference type="EnsemblBacteria" id="AAM01333">
    <property type="protein sequence ID" value="AAM01333"/>
    <property type="gene ID" value="MK0116"/>
</dbReference>
<dbReference type="GeneID" id="1477419"/>
<dbReference type="KEGG" id="mka:MK0116"/>
<dbReference type="PATRIC" id="fig|190192.8.peg.115"/>
<dbReference type="HOGENOM" id="CLU_081314_0_0_2"/>
<dbReference type="InParanoid" id="Q49610"/>
<dbReference type="OrthoDB" id="81373at2157"/>
<dbReference type="BRENDA" id="2.3.1.101">
    <property type="organism ID" value="3274"/>
</dbReference>
<dbReference type="UniPathway" id="UPA00640">
    <property type="reaction ID" value="UER00693"/>
</dbReference>
<dbReference type="EvolutionaryTrace" id="Q49610"/>
<dbReference type="Proteomes" id="UP000001826">
    <property type="component" value="Chromosome"/>
</dbReference>
<dbReference type="GO" id="GO:0005737">
    <property type="term" value="C:cytoplasm"/>
    <property type="evidence" value="ECO:0007669"/>
    <property type="project" value="UniProtKB-SubCell"/>
</dbReference>
<dbReference type="GO" id="GO:0030270">
    <property type="term" value="F:formylmethanofuran-tetrahydromethanopterin N-formyltransferase activity"/>
    <property type="evidence" value="ECO:0000314"/>
    <property type="project" value="MENGO"/>
</dbReference>
<dbReference type="GO" id="GO:0019386">
    <property type="term" value="P:methanogenesis, from carbon dioxide"/>
    <property type="evidence" value="ECO:0007669"/>
    <property type="project" value="UniProtKB-UniRule"/>
</dbReference>
<dbReference type="GO" id="GO:0006730">
    <property type="term" value="P:one-carbon metabolic process"/>
    <property type="evidence" value="ECO:0007669"/>
    <property type="project" value="UniProtKB-UniRule"/>
</dbReference>
<dbReference type="FunFam" id="3.30.70.520:FF:000001">
    <property type="entry name" value="Formylmethanofuran--tetrahydromethanopterin formyltransferase"/>
    <property type="match status" value="1"/>
</dbReference>
<dbReference type="Gene3D" id="3.30.70.520">
    <property type="match status" value="2"/>
</dbReference>
<dbReference type="HAMAP" id="MF_00579">
    <property type="entry name" value="FTR"/>
    <property type="match status" value="1"/>
</dbReference>
<dbReference type="InterPro" id="IPR014053">
    <property type="entry name" value="ForMFR_H4MPT_ForTrfase"/>
</dbReference>
<dbReference type="InterPro" id="IPR002770">
    <property type="entry name" value="ForMFR_H4MPT_ForTrfase_C"/>
</dbReference>
<dbReference type="InterPro" id="IPR023447">
    <property type="entry name" value="ForMFR_H4MPT_ForTrfase_fd-like"/>
</dbReference>
<dbReference type="InterPro" id="IPR022667">
    <property type="entry name" value="ForMFR_H4MPT_ForTrfase_N"/>
</dbReference>
<dbReference type="NCBIfam" id="TIGR03119">
    <property type="entry name" value="one_C_fhcD"/>
    <property type="match status" value="1"/>
</dbReference>
<dbReference type="NCBIfam" id="NF002554">
    <property type="entry name" value="PRK02114.1"/>
    <property type="match status" value="1"/>
</dbReference>
<dbReference type="Pfam" id="PF01913">
    <property type="entry name" value="FTR"/>
    <property type="match status" value="1"/>
</dbReference>
<dbReference type="Pfam" id="PF02741">
    <property type="entry name" value="FTR_C"/>
    <property type="match status" value="1"/>
</dbReference>
<dbReference type="PIRSF" id="PIRSF006414">
    <property type="entry name" value="Ftr_formyl_trnsf"/>
    <property type="match status" value="1"/>
</dbReference>
<dbReference type="SUPFAM" id="SSF55112">
    <property type="entry name" value="Formylmethanofuran:tetrahydromethanopterin formyltransferase"/>
    <property type="match status" value="2"/>
</dbReference>
<reference key="1">
    <citation type="journal article" date="1995" name="Eur. J. Biochem.">
        <title>Formylmethanofuran:tetrahydromethanopterin formyltransferase (Ftr) from the hyperthermophilic Methanopyrus kandleri. Cloning, sequencing and functional expression of the ftr gene and one-step purification of the enzyme overproduced in Escherichia coli.</title>
        <authorList>
            <person name="Shima S."/>
            <person name="Weiss D.S."/>
            <person name="Thauer R.K."/>
        </authorList>
    </citation>
    <scope>NUCLEOTIDE SEQUENCE [GENOMIC DNA]</scope>
    <scope>FUNCTION</scope>
    <scope>CATALYTIC ACTIVITY</scope>
    <source>
        <strain>AV19 / DSM 6324 / JCM 9639 / NBRC 100938</strain>
    </source>
</reference>
<reference key="2">
    <citation type="journal article" date="2002" name="Proc. Natl. Acad. Sci. U.S.A.">
        <title>The complete genome of hyperthermophile Methanopyrus kandleri AV19 and monophyly of archaeal methanogens.</title>
        <authorList>
            <person name="Slesarev A.I."/>
            <person name="Mezhevaya K.V."/>
            <person name="Makarova K.S."/>
            <person name="Polushin N.N."/>
            <person name="Shcherbinina O.V."/>
            <person name="Shakhova V.V."/>
            <person name="Belova G.I."/>
            <person name="Aravind L."/>
            <person name="Natale D.A."/>
            <person name="Rogozin I.B."/>
            <person name="Tatusov R.L."/>
            <person name="Wolf Y.I."/>
            <person name="Stetter K.O."/>
            <person name="Malykh A.G."/>
            <person name="Koonin E.V."/>
            <person name="Kozyavkin S.A."/>
        </authorList>
    </citation>
    <scope>NUCLEOTIDE SEQUENCE [LARGE SCALE GENOMIC DNA]</scope>
    <source>
        <strain>AV19 / DSM 6324 / JCM 9639 / NBRC 100938</strain>
    </source>
</reference>
<reference key="3">
    <citation type="journal article" date="1992" name="Eur. J. Biochem.">
        <title>Salt dependence, kinetic properties and catalytic mechanism of N-formylmethanofuran:tetrahydromethanopterin formyltransferase from the extreme thermophile Methanopyrus kandleri.</title>
        <authorList>
            <person name="Breitung J."/>
            <person name="Borner G."/>
            <person name="Scholz S."/>
            <person name="Linder D."/>
            <person name="Stetter K.O."/>
            <person name="Thauer R.K."/>
        </authorList>
    </citation>
    <scope>PROTEIN SEQUENCE OF 1-49</scope>
    <scope>FUNCTION</scope>
    <scope>SUBSTRATE SPECIFICITY</scope>
    <scope>CATALYTIC ACTIVITY</scope>
    <scope>ACTIVITY REGULATION</scope>
    <scope>BIOPHYSICOCHEMICAL PROPERTIES</scope>
    <scope>PATHWAY</scope>
    <source>
        <strain>AV19 / DSM 6324 / JCM 9639 / NBRC 100938</strain>
    </source>
</reference>
<reference key="4">
    <citation type="journal article" date="2000" name="Eur. J. Biochem.">
        <title>A mutation affecting the association equilibrium of formyltransferase from the hyperthermophilic Methanopyrus kandleri and its influence on the enzyme's activity and thermostability.</title>
        <authorList>
            <person name="Shima S."/>
            <person name="Thauer R.K."/>
            <person name="Ermler U."/>
            <person name="Durchschlag H."/>
            <person name="Tziatzios C."/>
            <person name="Schubert D."/>
        </authorList>
    </citation>
    <scope>FUNCTION</scope>
    <scope>CATALYTIC ACTIVITY</scope>
    <scope>SUBUNIT</scope>
    <scope>SUBCELLULAR LOCATION</scope>
    <scope>MUTAGENESIS OF ARG-261</scope>
</reference>
<reference evidence="9" key="5">
    <citation type="journal article" date="1997" name="Structure">
        <title>Formylmethanofuran: tetrahydromethanopterin formyltransferase from Methanopyrus kandleri -- new insights into salt-dependence and thermostability.</title>
        <authorList>
            <person name="Ermler U."/>
            <person name="Merckel M."/>
            <person name="Thauer R."/>
            <person name="Shima S."/>
        </authorList>
    </citation>
    <scope>X-RAY CRYSTALLOGRAPHY (1.7 ANGSTROMS)</scope>
    <scope>SUBUNIT</scope>
</reference>
<organism>
    <name type="scientific">Methanopyrus kandleri (strain AV19 / DSM 6324 / JCM 9639 / NBRC 100938)</name>
    <dbReference type="NCBI Taxonomy" id="190192"/>
    <lineage>
        <taxon>Archaea</taxon>
        <taxon>Methanobacteriati</taxon>
        <taxon>Methanobacteriota</taxon>
        <taxon>Methanomada group</taxon>
        <taxon>Methanopyri</taxon>
        <taxon>Methanopyrales</taxon>
        <taxon>Methanopyraceae</taxon>
        <taxon>Methanopyrus</taxon>
    </lineage>
</organism>
<name>FTR_METKA</name>
<protein>
    <recommendedName>
        <fullName evidence="1">Formylmethanofuran--tetrahydromethanopterin formyltransferase</fullName>
        <shortName evidence="1 6">Ftr</shortName>
        <ecNumber evidence="1 3">2.3.1.101</ecNumber>
    </recommendedName>
    <alternativeName>
        <fullName evidence="1">H4MPT formyltransferase</fullName>
    </alternativeName>
</protein>
<evidence type="ECO:0000255" key="1">
    <source>
        <dbReference type="HAMAP-Rule" id="MF_00579"/>
    </source>
</evidence>
<evidence type="ECO:0000269" key="2">
    <source>
    </source>
</evidence>
<evidence type="ECO:0000269" key="3">
    <source>
    </source>
</evidence>
<evidence type="ECO:0000269" key="4">
    <source>
    </source>
</evidence>
<evidence type="ECO:0000269" key="5">
    <source>
    </source>
</evidence>
<evidence type="ECO:0000303" key="6">
    <source>
    </source>
</evidence>
<evidence type="ECO:0000305" key="7"/>
<evidence type="ECO:0000305" key="8">
    <source>
    </source>
</evidence>
<evidence type="ECO:0007744" key="9">
    <source>
        <dbReference type="PDB" id="1FTR"/>
    </source>
</evidence>
<evidence type="ECO:0007829" key="10">
    <source>
        <dbReference type="PDB" id="1FTR"/>
    </source>
</evidence>
<accession>Q49610</accession>
<feature type="chain" id="PRO_0000138120" description="Formylmethanofuran--tetrahydromethanopterin formyltransferase">
    <location>
        <begin position="1"/>
        <end position="296"/>
    </location>
</feature>
<feature type="mutagenesis site" description="Weakens dimer-dimer association. Thermolabile." evidence="2">
    <original>R</original>
    <variation>E</variation>
    <location>
        <position position="261"/>
    </location>
</feature>
<feature type="sequence conflict" description="In Ref. 3; AA sequence." evidence="7" ref="3">
    <original>H</original>
    <variation>D</variation>
    <location>
        <position position="30"/>
    </location>
</feature>
<feature type="sequence conflict" description="In Ref. 3; AA sequence." evidence="7" ref="3">
    <original>W</original>
    <variation>K</variation>
    <location>
        <position position="32"/>
    </location>
</feature>
<feature type="sequence conflict" description="In Ref. 3; AA sequence." evidence="7" ref="3">
    <original>E</original>
    <variation>K</variation>
    <location>
        <position position="39"/>
    </location>
</feature>
<feature type="strand" evidence="10">
    <location>
        <begin position="6"/>
        <end position="8"/>
    </location>
</feature>
<feature type="strand" evidence="10">
    <location>
        <begin position="12"/>
        <end position="26"/>
    </location>
</feature>
<feature type="helix" evidence="10">
    <location>
        <begin position="30"/>
        <end position="41"/>
    </location>
</feature>
<feature type="turn" evidence="10">
    <location>
        <begin position="47"/>
        <end position="49"/>
    </location>
</feature>
<feature type="strand" evidence="10">
    <location>
        <begin position="53"/>
        <end position="61"/>
    </location>
</feature>
<feature type="helix" evidence="10">
    <location>
        <begin position="63"/>
        <end position="65"/>
    </location>
</feature>
<feature type="strand" evidence="10">
    <location>
        <begin position="72"/>
        <end position="81"/>
    </location>
</feature>
<feature type="helix" evidence="10">
    <location>
        <begin position="82"/>
        <end position="96"/>
    </location>
</feature>
<feature type="turn" evidence="10">
    <location>
        <begin position="97"/>
        <end position="99"/>
    </location>
</feature>
<feature type="strand" evidence="10">
    <location>
        <begin position="104"/>
        <end position="107"/>
    </location>
</feature>
<feature type="helix" evidence="10">
    <location>
        <begin position="111"/>
        <end position="113"/>
    </location>
</feature>
<feature type="strand" evidence="10">
    <location>
        <begin position="116"/>
        <end position="118"/>
    </location>
</feature>
<feature type="helix" evidence="10">
    <location>
        <begin position="120"/>
        <end position="125"/>
    </location>
</feature>
<feature type="helix" evidence="10">
    <location>
        <begin position="126"/>
        <end position="128"/>
    </location>
</feature>
<feature type="strand" evidence="10">
    <location>
        <begin position="133"/>
        <end position="137"/>
    </location>
</feature>
<feature type="strand" evidence="10">
    <location>
        <begin position="140"/>
        <end position="147"/>
    </location>
</feature>
<feature type="strand" evidence="10">
    <location>
        <begin position="150"/>
        <end position="156"/>
    </location>
</feature>
<feature type="strand" evidence="10">
    <location>
        <begin position="158"/>
        <end position="175"/>
    </location>
</feature>
<feature type="helix" evidence="10">
    <location>
        <begin position="176"/>
        <end position="190"/>
    </location>
</feature>
<feature type="helix" evidence="10">
    <location>
        <begin position="201"/>
        <end position="203"/>
    </location>
</feature>
<feature type="strand" evidence="10">
    <location>
        <begin position="205"/>
        <end position="207"/>
    </location>
</feature>
<feature type="strand" evidence="10">
    <location>
        <begin position="209"/>
        <end position="212"/>
    </location>
</feature>
<feature type="strand" evidence="10">
    <location>
        <begin position="220"/>
        <end position="223"/>
    </location>
</feature>
<feature type="helix" evidence="10">
    <location>
        <begin position="225"/>
        <end position="227"/>
    </location>
</feature>
<feature type="strand" evidence="10">
    <location>
        <begin position="242"/>
        <end position="252"/>
    </location>
</feature>
<feature type="helix" evidence="10">
    <location>
        <begin position="253"/>
        <end position="267"/>
    </location>
</feature>
<feature type="strand" evidence="10">
    <location>
        <begin position="273"/>
        <end position="277"/>
    </location>
</feature>
<feature type="strand" evidence="10">
    <location>
        <begin position="287"/>
        <end position="291"/>
    </location>
</feature>
<feature type="helix" evidence="10">
    <location>
        <begin position="292"/>
        <end position="295"/>
    </location>
</feature>
<sequence>MEINGVEIEDTFAEAFEAKMARVLITAASHKWAMIAVKEATGFGTSVIMCPAEAGIDCGYVPPEETPDGRPGVTIMIGHNDEDELKEQLLDRIGQCVMTAPTASAFDAMPEAEKEDEDRVGYKLSFFGDGYQEEDELDGRKVWKIPVVEGEFIVEDSFGITTGVAGGNFYIMAESQPAGLQAAEAAVDAIKGVEGAYAPFPGGIVASASKVGSKQYDFLPASTNDAYCPTVEDNELPEGVKCVYEIVINGLNEEAVKEAMRVGIEAACQQPGVVKISAGNFGGKLGQYEIHLHDLF</sequence>
<keyword id="KW-0002">3D-structure</keyword>
<keyword id="KW-0012">Acyltransferase</keyword>
<keyword id="KW-0963">Cytoplasm</keyword>
<keyword id="KW-0903">Direct protein sequencing</keyword>
<keyword id="KW-0484">Methanogenesis</keyword>
<keyword id="KW-0554">One-carbon metabolism</keyword>
<keyword id="KW-1185">Reference proteome</keyword>
<keyword id="KW-0808">Transferase</keyword>
<gene>
    <name evidence="1 6" type="primary">ftr</name>
    <name type="ordered locus">MK0116</name>
</gene>
<comment type="function">
    <text evidence="1 2 3 4">Catalyzes the reversible transfer of a formyl group from formylmethanofuran (formyl-MFR) to tetrahydromethanopterin (H(4)MPT) to produce 5-formyl tetrahydromethanopterin (5-formyl-H(4)MPT) and methanofuran (MFR) (By similarity) (PubMed:11054114, PubMed:1483480, PubMed:7601152). Acts via a ternary-complex mechanism. Uses N-furfurylformamide much less efficiently, does not use N-methylformamide or formamide (PubMed:11054114, PubMed:1483480, PubMed:7601152). Protein overexpressed in E.coli has very similar properties to enzyme purified from M.kandleri (PubMed:7601152).</text>
</comment>
<comment type="catalytic activity">
    <reaction evidence="1 2 3 4">
        <text>N-formylmethanofuran + 5,6,7,8-tetrahydromethanopterin + H(+) = N(5)-formyl-5,6,7,8-tetrahydromethanopterin + methanofuran</text>
        <dbReference type="Rhea" id="RHEA:18061"/>
        <dbReference type="ChEBI" id="CHEBI:15378"/>
        <dbReference type="ChEBI" id="CHEBI:57727"/>
        <dbReference type="ChEBI" id="CHEBI:58018"/>
        <dbReference type="ChEBI" id="CHEBI:58103"/>
        <dbReference type="ChEBI" id="CHEBI:58151"/>
        <dbReference type="EC" id="2.3.1.101"/>
    </reaction>
</comment>
<comment type="activity regulation">
    <text evidence="3">Requires high salt concentrations for activity and thermostability; 1.5-1.8 M KH(2)PO(4) stimulates activity while stabilizing the enzyme.</text>
</comment>
<comment type="biophysicochemical properties">
    <kinetics>
        <KM evidence="3">50 uM for N-formylmethanofuran</KM>
        <KM evidence="3">100 uM for 5,6,7,8-tetrahydromethanopterin</KM>
        <KM evidence="3">20 mM for N-furfurylformamide</KM>
        <Vmax evidence="3">2700.0 umol/min/mg enzyme reaction of N-formylmethanofuran and 5,6,7,8-tetrahydromethanopterin</Vmax>
        <Vmax evidence="3">68.0 umol/min/mg enzyme reaction of N-furfurylformamide</Vmax>
    </kinetics>
    <phDependence>
        <text evidence="3">Optimum pH is 6.5.</text>
    </phDependence>
    <temperatureDependence>
        <text evidence="3">Optimum temperature is 90 degrees Celsius.</text>
    </temperatureDependence>
</comment>
<comment type="pathway">
    <text evidence="1 8">One-carbon metabolism; methanogenesis from CO(2); 5,10-methenyl-5,6,7,8-tetrahydromethanopterin from CO(2): step 2/3.</text>
</comment>
<comment type="subunit">
    <text evidence="2 5">Homotetramer composed of two dimers (PubMed:11054114, PubMed:9195883). Dimerization is sufficient for enzyme activity, but tetramerization is required for high thermostability (PubMed:11054114).</text>
</comment>
<comment type="subcellular location">
    <subcellularLocation>
        <location evidence="1 8">Cytoplasm</location>
    </subcellularLocation>
</comment>
<comment type="similarity">
    <text evidence="1">Belongs to the FTR family.</text>
</comment>